<organism>
    <name type="scientific">Aquifex aeolicus (strain VF5)</name>
    <dbReference type="NCBI Taxonomy" id="224324"/>
    <lineage>
        <taxon>Bacteria</taxon>
        <taxon>Pseudomonadati</taxon>
        <taxon>Aquificota</taxon>
        <taxon>Aquificia</taxon>
        <taxon>Aquificales</taxon>
        <taxon>Aquificaceae</taxon>
        <taxon>Aquifex</taxon>
    </lineage>
</organism>
<gene>
    <name type="ordered locus">aq_2005</name>
</gene>
<dbReference type="EMBL" id="AE000657">
    <property type="protein sequence ID" value="AAC07770.1"/>
    <property type="molecule type" value="Genomic_DNA"/>
</dbReference>
<dbReference type="PIR" id="D70472">
    <property type="entry name" value="D70472"/>
</dbReference>
<dbReference type="RefSeq" id="WP_010881313.1">
    <property type="nucleotide sequence ID" value="NC_000918.1"/>
</dbReference>
<dbReference type="SMR" id="O67808"/>
<dbReference type="STRING" id="224324.aq_2005"/>
<dbReference type="EnsemblBacteria" id="AAC07770">
    <property type="protein sequence ID" value="AAC07770"/>
    <property type="gene ID" value="aq_2005"/>
</dbReference>
<dbReference type="eggNOG" id="COG0354">
    <property type="taxonomic scope" value="Bacteria"/>
</dbReference>
<dbReference type="HOGENOM" id="CLU_1745904_0_0_0"/>
<dbReference type="InParanoid" id="O67808"/>
<dbReference type="Proteomes" id="UP000000798">
    <property type="component" value="Chromosome"/>
</dbReference>
<dbReference type="Gene3D" id="3.30.1360.120">
    <property type="entry name" value="Probable tRNA modification gtpase trme, domain 1"/>
    <property type="match status" value="1"/>
</dbReference>
<dbReference type="InterPro" id="IPR006222">
    <property type="entry name" value="GCV_T_N"/>
</dbReference>
<dbReference type="InterPro" id="IPR027266">
    <property type="entry name" value="TrmE/GcvT_dom1"/>
</dbReference>
<dbReference type="Pfam" id="PF01571">
    <property type="entry name" value="GCV_T"/>
    <property type="match status" value="1"/>
</dbReference>
<dbReference type="SUPFAM" id="SSF103025">
    <property type="entry name" value="Folate-binding domain"/>
    <property type="match status" value="1"/>
</dbReference>
<sequence length="149" mass="17778">MKWIDLKRSKIKVYGKPVKMLMKGLTAPEEHTHFLHGLLTNDIKSLKPYTFNYNLWLKQNGQPIADFFVYKIKDYYILDTEEPADFVINEFNRLKLSLKVYFEDLTPNYKHVFIYGEGAEEFVKEKFGVELSDYEIKELKEELTLRKIL</sequence>
<reference key="1">
    <citation type="journal article" date="1998" name="Nature">
        <title>The complete genome of the hyperthermophilic bacterium Aquifex aeolicus.</title>
        <authorList>
            <person name="Deckert G."/>
            <person name="Warren P.V."/>
            <person name="Gaasterland T."/>
            <person name="Young W.G."/>
            <person name="Lenox A.L."/>
            <person name="Graham D.E."/>
            <person name="Overbeek R."/>
            <person name="Snead M.A."/>
            <person name="Keller M."/>
            <person name="Aujay M."/>
            <person name="Huber R."/>
            <person name="Feldman R.A."/>
            <person name="Short J.M."/>
            <person name="Olsen G.J."/>
            <person name="Swanson R.V."/>
        </authorList>
    </citation>
    <scope>NUCLEOTIDE SEQUENCE [LARGE SCALE GENOMIC DNA]</scope>
    <source>
        <strain>VF5</strain>
    </source>
</reference>
<accession>O67808</accession>
<keyword id="KW-1185">Reference proteome</keyword>
<proteinExistence type="predicted"/>
<name>Y2005_AQUAE</name>
<feature type="chain" id="PRO_0000186963" description="Uncharacterized protein aq_2005">
    <location>
        <begin position="1"/>
        <end position="149"/>
    </location>
</feature>
<protein>
    <recommendedName>
        <fullName>Uncharacterized protein aq_2005</fullName>
    </recommendedName>
</protein>